<reference key="1">
    <citation type="journal article" date="1993" name="Appl. Environ. Microbiol.">
        <title>Molecular breeding of a biotin-hyperproducing Serratia marcescens strain.</title>
        <authorList>
            <person name="Sakurai N."/>
            <person name="Imai Y."/>
            <person name="Masuda M."/>
            <person name="Komatsubara S."/>
            <person name="Tosa T."/>
        </authorList>
    </citation>
    <scope>NUCLEOTIDE SEQUENCE [GENOMIC DNA]</scope>
    <source>
        <strain>Sr41</strain>
    </source>
</reference>
<accession>P36570</accession>
<comment type="function">
    <text evidence="1">Catalyzes the decarboxylative condensation of pimeloyl-[acyl-carrier protein] and L-alanine to produce 8-amino-7-oxononanoate (AON), [acyl-carrier protein], and carbon dioxide.</text>
</comment>
<comment type="catalytic activity">
    <reaction evidence="1">
        <text>6-carboxyhexanoyl-[ACP] + L-alanine + H(+) = (8S)-8-amino-7-oxononanoate + holo-[ACP] + CO2</text>
        <dbReference type="Rhea" id="RHEA:42288"/>
        <dbReference type="Rhea" id="RHEA-COMP:9685"/>
        <dbReference type="Rhea" id="RHEA-COMP:9955"/>
        <dbReference type="ChEBI" id="CHEBI:15378"/>
        <dbReference type="ChEBI" id="CHEBI:16526"/>
        <dbReference type="ChEBI" id="CHEBI:57972"/>
        <dbReference type="ChEBI" id="CHEBI:64479"/>
        <dbReference type="ChEBI" id="CHEBI:78846"/>
        <dbReference type="ChEBI" id="CHEBI:149468"/>
        <dbReference type="EC" id="2.3.1.47"/>
    </reaction>
</comment>
<comment type="cofactor">
    <cofactor evidence="1">
        <name>pyridoxal 5'-phosphate</name>
        <dbReference type="ChEBI" id="CHEBI:597326"/>
    </cofactor>
</comment>
<comment type="pathway">
    <text evidence="1">Cofactor biosynthesis; biotin biosynthesis.</text>
</comment>
<comment type="subunit">
    <text evidence="1">Homodimer.</text>
</comment>
<comment type="similarity">
    <text evidence="1">Belongs to the class-II pyridoxal-phosphate-dependent aminotransferase family. BioF subfamily.</text>
</comment>
<organism>
    <name type="scientific">Serratia marcescens</name>
    <dbReference type="NCBI Taxonomy" id="615"/>
    <lineage>
        <taxon>Bacteria</taxon>
        <taxon>Pseudomonadati</taxon>
        <taxon>Pseudomonadota</taxon>
        <taxon>Gammaproteobacteria</taxon>
        <taxon>Enterobacterales</taxon>
        <taxon>Yersiniaceae</taxon>
        <taxon>Serratia</taxon>
    </lineage>
</organism>
<feature type="chain" id="PRO_0000163819" description="8-amino-7-oxononanoate synthase">
    <location>
        <begin position="1"/>
        <end position="382"/>
    </location>
</feature>
<feature type="binding site" evidence="1">
    <location>
        <position position="21"/>
    </location>
    <ligand>
        <name>substrate</name>
    </ligand>
</feature>
<feature type="binding site" evidence="1">
    <location>
        <position position="131"/>
    </location>
    <ligand>
        <name>substrate</name>
    </ligand>
</feature>
<feature type="binding site" evidence="1">
    <location>
        <position position="178"/>
    </location>
    <ligand>
        <name>pyridoxal 5'-phosphate</name>
        <dbReference type="ChEBI" id="CHEBI:597326"/>
    </ligand>
</feature>
<feature type="binding site" evidence="1">
    <location>
        <position position="206"/>
    </location>
    <ligand>
        <name>pyridoxal 5'-phosphate</name>
        <dbReference type="ChEBI" id="CHEBI:597326"/>
    </ligand>
</feature>
<feature type="binding site" evidence="1">
    <location>
        <position position="232"/>
    </location>
    <ligand>
        <name>pyridoxal 5'-phosphate</name>
        <dbReference type="ChEBI" id="CHEBI:597326"/>
    </ligand>
</feature>
<feature type="binding site" evidence="1">
    <location>
        <position position="349"/>
    </location>
    <ligand>
        <name>substrate</name>
    </ligand>
</feature>
<feature type="modified residue" description="N6-(pyridoxal phosphate)lysine" evidence="1">
    <location>
        <position position="235"/>
    </location>
</feature>
<evidence type="ECO:0000255" key="1">
    <source>
        <dbReference type="HAMAP-Rule" id="MF_01693"/>
    </source>
</evidence>
<keyword id="KW-0093">Biotin biosynthesis</keyword>
<keyword id="KW-0663">Pyridoxal phosphate</keyword>
<keyword id="KW-0808">Transferase</keyword>
<dbReference type="EC" id="2.3.1.47" evidence="1"/>
<dbReference type="EMBL" id="D17468">
    <property type="protein sequence ID" value="BAA04286.1"/>
    <property type="molecule type" value="Genomic_DNA"/>
</dbReference>
<dbReference type="SMR" id="P36570"/>
<dbReference type="STRING" id="273526.SMDB11_0561"/>
<dbReference type="UniPathway" id="UPA00078"/>
<dbReference type="GO" id="GO:0008710">
    <property type="term" value="F:8-amino-7-oxononanoate synthase activity"/>
    <property type="evidence" value="ECO:0007669"/>
    <property type="project" value="UniProtKB-UniRule"/>
</dbReference>
<dbReference type="GO" id="GO:0030170">
    <property type="term" value="F:pyridoxal phosphate binding"/>
    <property type="evidence" value="ECO:0007669"/>
    <property type="project" value="UniProtKB-UniRule"/>
</dbReference>
<dbReference type="GO" id="GO:0009102">
    <property type="term" value="P:biotin biosynthetic process"/>
    <property type="evidence" value="ECO:0007669"/>
    <property type="project" value="UniProtKB-UniRule"/>
</dbReference>
<dbReference type="Gene3D" id="3.90.1150.10">
    <property type="entry name" value="Aspartate Aminotransferase, domain 1"/>
    <property type="match status" value="1"/>
</dbReference>
<dbReference type="Gene3D" id="3.40.640.10">
    <property type="entry name" value="Type I PLP-dependent aspartate aminotransferase-like (Major domain)"/>
    <property type="match status" value="1"/>
</dbReference>
<dbReference type="HAMAP" id="MF_01693">
    <property type="entry name" value="BioF_aminotrans_2"/>
    <property type="match status" value="1"/>
</dbReference>
<dbReference type="InterPro" id="IPR001917">
    <property type="entry name" value="Aminotrans_II_pyridoxalP_BS"/>
</dbReference>
<dbReference type="InterPro" id="IPR004839">
    <property type="entry name" value="Aminotransferase_I/II_large"/>
</dbReference>
<dbReference type="InterPro" id="IPR050087">
    <property type="entry name" value="AON_synthase_class-II"/>
</dbReference>
<dbReference type="InterPro" id="IPR022834">
    <property type="entry name" value="AONS_Proteobacteria"/>
</dbReference>
<dbReference type="InterPro" id="IPR015424">
    <property type="entry name" value="PyrdxlP-dep_Trfase"/>
</dbReference>
<dbReference type="InterPro" id="IPR015421">
    <property type="entry name" value="PyrdxlP-dep_Trfase_major"/>
</dbReference>
<dbReference type="InterPro" id="IPR015422">
    <property type="entry name" value="PyrdxlP-dep_Trfase_small"/>
</dbReference>
<dbReference type="PANTHER" id="PTHR13693:SF100">
    <property type="entry name" value="8-AMINO-7-OXONONANOATE SYNTHASE"/>
    <property type="match status" value="1"/>
</dbReference>
<dbReference type="PANTHER" id="PTHR13693">
    <property type="entry name" value="CLASS II AMINOTRANSFERASE/8-AMINO-7-OXONONANOATE SYNTHASE"/>
    <property type="match status" value="1"/>
</dbReference>
<dbReference type="Pfam" id="PF00155">
    <property type="entry name" value="Aminotran_1_2"/>
    <property type="match status" value="1"/>
</dbReference>
<dbReference type="SUPFAM" id="SSF53383">
    <property type="entry name" value="PLP-dependent transferases"/>
    <property type="match status" value="1"/>
</dbReference>
<dbReference type="PROSITE" id="PS00599">
    <property type="entry name" value="AA_TRANSFER_CLASS_2"/>
    <property type="match status" value="1"/>
</dbReference>
<name>BIOF_SERMA</name>
<gene>
    <name evidence="1" type="primary">bioF</name>
</gene>
<sequence length="382" mass="41084">MSWQQRIEQALAERRLNAAYRRRQTTEGGNGRQIRLGDRLYLNFSGNDYLGLSQDARVIAAWQQGARYGVGNGGSGHVTGFSAAHQALEEQLAAWLGYPRALLFISYAANQAVLAALMQKGDRILADRLSHASLLEAAGAVAGRRAPVPAQSTAGLARICLAKPCDGQRLAVTEGLFSMDGDGAPLAELHRLTRAAGAWLMVDDAHGIGVRGEQGRGSCWQQGVRPELLVATFGKAFGVSGAAVLCDEATAEYLLQFARHLIYSTAMPPAQACALQAALARIREGDDLRARLQDNIRRFRQGAAPLALTLTDSDTAIQPLLVGDNQRALDLATRLRECGLWVSAIRPPTVPPGGARLRLLLTAAHQSQDIDRLLEVLNDVSQ</sequence>
<protein>
    <recommendedName>
        <fullName evidence="1">8-amino-7-oxononanoate synthase</fullName>
        <shortName evidence="1">AONS</shortName>
        <ecNumber evidence="1">2.3.1.47</ecNumber>
    </recommendedName>
    <alternativeName>
        <fullName evidence="1">7-keto-8-amino-pelargonic acid synthase</fullName>
        <shortName evidence="1">7-KAP synthase</shortName>
        <shortName evidence="1">KAPA synthase</shortName>
    </alternativeName>
    <alternativeName>
        <fullName evidence="1">8-amino-7-ketopelargonate synthase</fullName>
    </alternativeName>
</protein>
<proteinExistence type="inferred from homology"/>